<keyword id="KW-0067">ATP-binding</keyword>
<keyword id="KW-0131">Cell cycle</keyword>
<keyword id="KW-0132">Cell division</keyword>
<keyword id="KW-0133">Cell shape</keyword>
<keyword id="KW-0961">Cell wall biogenesis/degradation</keyword>
<keyword id="KW-0963">Cytoplasm</keyword>
<keyword id="KW-0436">Ligase</keyword>
<keyword id="KW-0460">Magnesium</keyword>
<keyword id="KW-0547">Nucleotide-binding</keyword>
<keyword id="KW-0573">Peptidoglycan synthesis</keyword>
<keyword id="KW-1185">Reference proteome</keyword>
<name>MURE_GEOMG</name>
<proteinExistence type="inferred from homology"/>
<accession>Q39YM4</accession>
<comment type="function">
    <text evidence="1">Catalyzes the addition of meso-diaminopimelic acid to the nucleotide precursor UDP-N-acetylmuramoyl-L-alanyl-D-glutamate (UMAG) in the biosynthesis of bacterial cell-wall peptidoglycan.</text>
</comment>
<comment type="catalytic activity">
    <reaction evidence="1">
        <text>UDP-N-acetyl-alpha-D-muramoyl-L-alanyl-D-glutamate + meso-2,6-diaminopimelate + ATP = UDP-N-acetyl-alpha-D-muramoyl-L-alanyl-gamma-D-glutamyl-meso-2,6-diaminopimelate + ADP + phosphate + H(+)</text>
        <dbReference type="Rhea" id="RHEA:23676"/>
        <dbReference type="ChEBI" id="CHEBI:15378"/>
        <dbReference type="ChEBI" id="CHEBI:30616"/>
        <dbReference type="ChEBI" id="CHEBI:43474"/>
        <dbReference type="ChEBI" id="CHEBI:57791"/>
        <dbReference type="ChEBI" id="CHEBI:83900"/>
        <dbReference type="ChEBI" id="CHEBI:83905"/>
        <dbReference type="ChEBI" id="CHEBI:456216"/>
        <dbReference type="EC" id="6.3.2.13"/>
    </reaction>
</comment>
<comment type="cofactor">
    <cofactor evidence="1">
        <name>Mg(2+)</name>
        <dbReference type="ChEBI" id="CHEBI:18420"/>
    </cofactor>
</comment>
<comment type="pathway">
    <text evidence="1">Cell wall biogenesis; peptidoglycan biosynthesis.</text>
</comment>
<comment type="subcellular location">
    <subcellularLocation>
        <location evidence="1">Cytoplasm</location>
    </subcellularLocation>
</comment>
<comment type="PTM">
    <text evidence="1">Carboxylation is probably crucial for Mg(2+) binding and, consequently, for the gamma-phosphate positioning of ATP.</text>
</comment>
<comment type="similarity">
    <text evidence="1">Belongs to the MurCDEF family. MurE subfamily.</text>
</comment>
<organism>
    <name type="scientific">Geobacter metallireducens (strain ATCC 53774 / DSM 7210 / GS-15)</name>
    <dbReference type="NCBI Taxonomy" id="269799"/>
    <lineage>
        <taxon>Bacteria</taxon>
        <taxon>Pseudomonadati</taxon>
        <taxon>Thermodesulfobacteriota</taxon>
        <taxon>Desulfuromonadia</taxon>
        <taxon>Geobacterales</taxon>
        <taxon>Geobacteraceae</taxon>
        <taxon>Geobacter</taxon>
    </lineage>
</organism>
<reference key="1">
    <citation type="journal article" date="2009" name="BMC Microbiol.">
        <title>The genome sequence of Geobacter metallireducens: features of metabolism, physiology and regulation common and dissimilar to Geobacter sulfurreducens.</title>
        <authorList>
            <person name="Aklujkar M."/>
            <person name="Krushkal J."/>
            <person name="DiBartolo G."/>
            <person name="Lapidus A."/>
            <person name="Land M.L."/>
            <person name="Lovley D.R."/>
        </authorList>
    </citation>
    <scope>NUCLEOTIDE SEQUENCE [LARGE SCALE GENOMIC DNA]</scope>
    <source>
        <strain>ATCC 53774 / DSM 7210 / GS-15</strain>
    </source>
</reference>
<sequence>MRLEDLARVINPSEAGGSLALEIEGLYCDSRQVRSGGLFFALRGVATDGHDYIVASRDRGAVAVVVEDPSRVPEGMTWLKVDDARLAMSRAAAAFYGNPTDGIPVVGITGTNGKTTTTYLVEAVMARAGIPVAVLGTISYRFGDKTIPAPHTTPESVDLQRTIRDLVDRGAQGVVMEVSSHALEQRRVDGCRFDVGVFTNLTRDHLDYHRDMESYFESKARLFTELLAADDTKPRRAAVINVDDPYGARLASDAVAPVVSYGLSPSVMVRAEMVTFSVDGISGTLVTPLGTIPFHSRLLGRFNLYNILAAVAAGVALGLSPDAIRGGIEGDVRVPGRLERVDNDHGITVLVDYAHTGDALENVLKTVAEIATGRIITVFGCGGDRDRGKRPVMGEIAGRFSDLSIVTSDNPRTEDAGAIIGEILGGIRSLGLREYGAEELITGFDAKGFAAVESRREAIRLAARVARPGDVLLLAGKGHEDYQIIGTMKHHFDDREEVAAAFRELSSKGQG</sequence>
<protein>
    <recommendedName>
        <fullName evidence="1">UDP-N-acetylmuramoyl-L-alanyl-D-glutamate--2,6-diaminopimelate ligase</fullName>
        <ecNumber evidence="1">6.3.2.13</ecNumber>
    </recommendedName>
    <alternativeName>
        <fullName evidence="1">Meso-A2pm-adding enzyme</fullName>
    </alternativeName>
    <alternativeName>
        <fullName evidence="1">Meso-diaminopimelate-adding enzyme</fullName>
    </alternativeName>
    <alternativeName>
        <fullName evidence="1">UDP-MurNAc-L-Ala-D-Glu:meso-diaminopimelate ligase</fullName>
    </alternativeName>
    <alternativeName>
        <fullName evidence="1">UDP-MurNAc-tripeptide synthetase</fullName>
    </alternativeName>
    <alternativeName>
        <fullName evidence="1">UDP-N-acetylmuramyl-tripeptide synthetase</fullName>
    </alternativeName>
</protein>
<evidence type="ECO:0000255" key="1">
    <source>
        <dbReference type="HAMAP-Rule" id="MF_00208"/>
    </source>
</evidence>
<dbReference type="EC" id="6.3.2.13" evidence="1"/>
<dbReference type="EMBL" id="CP000148">
    <property type="protein sequence ID" value="ABB30650.1"/>
    <property type="molecule type" value="Genomic_DNA"/>
</dbReference>
<dbReference type="RefSeq" id="WP_004512379.1">
    <property type="nucleotide sequence ID" value="NC_007517.1"/>
</dbReference>
<dbReference type="SMR" id="Q39YM4"/>
<dbReference type="STRING" id="269799.Gmet_0407"/>
<dbReference type="KEGG" id="gme:Gmet_0407"/>
<dbReference type="eggNOG" id="COG0769">
    <property type="taxonomic scope" value="Bacteria"/>
</dbReference>
<dbReference type="HOGENOM" id="CLU_022291_4_1_7"/>
<dbReference type="UniPathway" id="UPA00219"/>
<dbReference type="Proteomes" id="UP000007073">
    <property type="component" value="Chromosome"/>
</dbReference>
<dbReference type="GO" id="GO:0005737">
    <property type="term" value="C:cytoplasm"/>
    <property type="evidence" value="ECO:0007669"/>
    <property type="project" value="UniProtKB-SubCell"/>
</dbReference>
<dbReference type="GO" id="GO:0005524">
    <property type="term" value="F:ATP binding"/>
    <property type="evidence" value="ECO:0007669"/>
    <property type="project" value="UniProtKB-UniRule"/>
</dbReference>
<dbReference type="GO" id="GO:0000287">
    <property type="term" value="F:magnesium ion binding"/>
    <property type="evidence" value="ECO:0007669"/>
    <property type="project" value="UniProtKB-UniRule"/>
</dbReference>
<dbReference type="GO" id="GO:0008765">
    <property type="term" value="F:UDP-N-acetylmuramoylalanyl-D-glutamate-2,6-diaminopimelate ligase activity"/>
    <property type="evidence" value="ECO:0007669"/>
    <property type="project" value="UniProtKB-UniRule"/>
</dbReference>
<dbReference type="GO" id="GO:0051301">
    <property type="term" value="P:cell division"/>
    <property type="evidence" value="ECO:0007669"/>
    <property type="project" value="UniProtKB-KW"/>
</dbReference>
<dbReference type="GO" id="GO:0071555">
    <property type="term" value="P:cell wall organization"/>
    <property type="evidence" value="ECO:0007669"/>
    <property type="project" value="UniProtKB-KW"/>
</dbReference>
<dbReference type="GO" id="GO:0009252">
    <property type="term" value="P:peptidoglycan biosynthetic process"/>
    <property type="evidence" value="ECO:0007669"/>
    <property type="project" value="UniProtKB-UniRule"/>
</dbReference>
<dbReference type="GO" id="GO:0008360">
    <property type="term" value="P:regulation of cell shape"/>
    <property type="evidence" value="ECO:0007669"/>
    <property type="project" value="UniProtKB-KW"/>
</dbReference>
<dbReference type="FunFam" id="3.90.190.20:FF:000006">
    <property type="entry name" value="UDP-N-acetylmuramoyl-L-alanyl-D-glutamate--2,6-diaminopimelate ligase"/>
    <property type="match status" value="1"/>
</dbReference>
<dbReference type="Gene3D" id="3.90.190.20">
    <property type="entry name" value="Mur ligase, C-terminal domain"/>
    <property type="match status" value="1"/>
</dbReference>
<dbReference type="Gene3D" id="3.40.1190.10">
    <property type="entry name" value="Mur-like, catalytic domain"/>
    <property type="match status" value="1"/>
</dbReference>
<dbReference type="Gene3D" id="3.40.1390.10">
    <property type="entry name" value="MurE/MurF, N-terminal domain"/>
    <property type="match status" value="1"/>
</dbReference>
<dbReference type="HAMAP" id="MF_00208">
    <property type="entry name" value="MurE"/>
    <property type="match status" value="1"/>
</dbReference>
<dbReference type="InterPro" id="IPR036565">
    <property type="entry name" value="Mur-like_cat_sf"/>
</dbReference>
<dbReference type="InterPro" id="IPR004101">
    <property type="entry name" value="Mur_ligase_C"/>
</dbReference>
<dbReference type="InterPro" id="IPR036615">
    <property type="entry name" value="Mur_ligase_C_dom_sf"/>
</dbReference>
<dbReference type="InterPro" id="IPR013221">
    <property type="entry name" value="Mur_ligase_cen"/>
</dbReference>
<dbReference type="InterPro" id="IPR000713">
    <property type="entry name" value="Mur_ligase_N"/>
</dbReference>
<dbReference type="InterPro" id="IPR035911">
    <property type="entry name" value="MurE/MurF_N"/>
</dbReference>
<dbReference type="InterPro" id="IPR005761">
    <property type="entry name" value="UDP-N-AcMur-Glu-dNH2Pim_ligase"/>
</dbReference>
<dbReference type="NCBIfam" id="TIGR01085">
    <property type="entry name" value="murE"/>
    <property type="match status" value="1"/>
</dbReference>
<dbReference type="NCBIfam" id="NF001124">
    <property type="entry name" value="PRK00139.1-2"/>
    <property type="match status" value="1"/>
</dbReference>
<dbReference type="NCBIfam" id="NF001126">
    <property type="entry name" value="PRK00139.1-4"/>
    <property type="match status" value="1"/>
</dbReference>
<dbReference type="PANTHER" id="PTHR23135">
    <property type="entry name" value="MUR LIGASE FAMILY MEMBER"/>
    <property type="match status" value="1"/>
</dbReference>
<dbReference type="PANTHER" id="PTHR23135:SF4">
    <property type="entry name" value="UDP-N-ACETYLMURAMOYL-L-ALANYL-D-GLUTAMATE--2,6-DIAMINOPIMELATE LIGASE MURE HOMOLOG, CHLOROPLASTIC"/>
    <property type="match status" value="1"/>
</dbReference>
<dbReference type="Pfam" id="PF01225">
    <property type="entry name" value="Mur_ligase"/>
    <property type="match status" value="1"/>
</dbReference>
<dbReference type="Pfam" id="PF02875">
    <property type="entry name" value="Mur_ligase_C"/>
    <property type="match status" value="1"/>
</dbReference>
<dbReference type="Pfam" id="PF08245">
    <property type="entry name" value="Mur_ligase_M"/>
    <property type="match status" value="1"/>
</dbReference>
<dbReference type="SUPFAM" id="SSF53623">
    <property type="entry name" value="MurD-like peptide ligases, catalytic domain"/>
    <property type="match status" value="1"/>
</dbReference>
<dbReference type="SUPFAM" id="SSF53244">
    <property type="entry name" value="MurD-like peptide ligases, peptide-binding domain"/>
    <property type="match status" value="1"/>
</dbReference>
<dbReference type="SUPFAM" id="SSF63418">
    <property type="entry name" value="MurE/MurF N-terminal domain"/>
    <property type="match status" value="1"/>
</dbReference>
<feature type="chain" id="PRO_1000012353" description="UDP-N-acetylmuramoyl-L-alanyl-D-glutamate--2,6-diaminopimelate ligase">
    <location>
        <begin position="1"/>
        <end position="511"/>
    </location>
</feature>
<feature type="short sequence motif" description="Meso-diaminopimelate recognition motif">
    <location>
        <begin position="409"/>
        <end position="412"/>
    </location>
</feature>
<feature type="binding site" evidence="1">
    <location>
        <position position="30"/>
    </location>
    <ligand>
        <name>UDP-N-acetyl-alpha-D-muramoyl-L-alanyl-D-glutamate</name>
        <dbReference type="ChEBI" id="CHEBI:83900"/>
    </ligand>
</feature>
<feature type="binding site" evidence="1">
    <location>
        <begin position="110"/>
        <end position="116"/>
    </location>
    <ligand>
        <name>ATP</name>
        <dbReference type="ChEBI" id="CHEBI:30616"/>
    </ligand>
</feature>
<feature type="binding site" evidence="1">
    <location>
        <begin position="152"/>
        <end position="153"/>
    </location>
    <ligand>
        <name>UDP-N-acetyl-alpha-D-muramoyl-L-alanyl-D-glutamate</name>
        <dbReference type="ChEBI" id="CHEBI:83900"/>
    </ligand>
</feature>
<feature type="binding site" evidence="1">
    <location>
        <position position="179"/>
    </location>
    <ligand>
        <name>UDP-N-acetyl-alpha-D-muramoyl-L-alanyl-D-glutamate</name>
        <dbReference type="ChEBI" id="CHEBI:83900"/>
    </ligand>
</feature>
<feature type="binding site" evidence="1">
    <location>
        <position position="185"/>
    </location>
    <ligand>
        <name>UDP-N-acetyl-alpha-D-muramoyl-L-alanyl-D-glutamate</name>
        <dbReference type="ChEBI" id="CHEBI:83900"/>
    </ligand>
</feature>
<feature type="binding site" evidence="1">
    <location>
        <position position="187"/>
    </location>
    <ligand>
        <name>UDP-N-acetyl-alpha-D-muramoyl-L-alanyl-D-glutamate</name>
        <dbReference type="ChEBI" id="CHEBI:83900"/>
    </ligand>
</feature>
<feature type="binding site" evidence="1">
    <location>
        <position position="385"/>
    </location>
    <ligand>
        <name>meso-2,6-diaminopimelate</name>
        <dbReference type="ChEBI" id="CHEBI:57791"/>
    </ligand>
</feature>
<feature type="binding site" evidence="1">
    <location>
        <begin position="409"/>
        <end position="412"/>
    </location>
    <ligand>
        <name>meso-2,6-diaminopimelate</name>
        <dbReference type="ChEBI" id="CHEBI:57791"/>
    </ligand>
</feature>
<feature type="binding site" evidence="1">
    <location>
        <position position="476"/>
    </location>
    <ligand>
        <name>meso-2,6-diaminopimelate</name>
        <dbReference type="ChEBI" id="CHEBI:57791"/>
    </ligand>
</feature>
<feature type="binding site" evidence="1">
    <location>
        <position position="480"/>
    </location>
    <ligand>
        <name>meso-2,6-diaminopimelate</name>
        <dbReference type="ChEBI" id="CHEBI:57791"/>
    </ligand>
</feature>
<feature type="modified residue" description="N6-carboxylysine" evidence="1">
    <location>
        <position position="219"/>
    </location>
</feature>
<gene>
    <name evidence="1" type="primary">murE</name>
    <name type="ordered locus">Gmet_0407</name>
</gene>